<accession>Q4VZP2</accession>
<accession>A5J1S5</accession>
<accession>Q2QD98</accession>
<comment type="function">
    <text evidence="1">DNA-dependent RNA polymerase catalyzes the transcription of DNA into RNA using the four ribonucleoside triphosphates as substrates.</text>
</comment>
<comment type="catalytic activity">
    <reaction evidence="1">
        <text>RNA(n) + a ribonucleoside 5'-triphosphate = RNA(n+1) + diphosphate</text>
        <dbReference type="Rhea" id="RHEA:21248"/>
        <dbReference type="Rhea" id="RHEA-COMP:14527"/>
        <dbReference type="Rhea" id="RHEA-COMP:17342"/>
        <dbReference type="ChEBI" id="CHEBI:33019"/>
        <dbReference type="ChEBI" id="CHEBI:61557"/>
        <dbReference type="ChEBI" id="CHEBI:140395"/>
        <dbReference type="EC" id="2.7.7.6"/>
    </reaction>
</comment>
<comment type="cofactor">
    <cofactor evidence="1">
        <name>Mg(2+)</name>
        <dbReference type="ChEBI" id="CHEBI:18420"/>
    </cofactor>
    <text evidence="1">Binds 1 Mg(2+) ion per subunit.</text>
</comment>
<comment type="cofactor">
    <cofactor evidence="1">
        <name>Zn(2+)</name>
        <dbReference type="ChEBI" id="CHEBI:29105"/>
    </cofactor>
    <text evidence="1">Binds 1 Zn(2+) ion per subunit.</text>
</comment>
<comment type="subunit">
    <text evidence="1">In plastids the minimal PEP RNA polymerase catalytic core is composed of four subunits: alpha, beta, beta', and beta''. When a (nuclear-encoded) sigma factor is associated with the core the holoenzyme is formed, which can initiate transcription.</text>
</comment>
<comment type="subcellular location">
    <subcellularLocation>
        <location evidence="1">Plastid</location>
        <location evidence="1">Chloroplast</location>
    </subcellularLocation>
</comment>
<comment type="similarity">
    <text evidence="1">Belongs to the RNA polymerase beta' chain family. RpoC1 subfamily.</text>
</comment>
<comment type="sequence caution" evidence="2">
    <conflict type="erroneous initiation">
        <sequence resource="EMBL-CDS" id="AAZ94642"/>
    </conflict>
    <text>Extended N-terminus.</text>
</comment>
<comment type="sequence caution" evidence="2">
    <conflict type="erroneous initiation">
        <sequence resource="EMBL-CDS" id="CAJ00749"/>
    </conflict>
    <text>Extended N-terminus.</text>
</comment>
<geneLocation type="chloroplast"/>
<protein>
    <recommendedName>
        <fullName evidence="1">DNA-directed RNA polymerase subunit beta'</fullName>
        <ecNumber evidence="1">2.7.7.6</ecNumber>
    </recommendedName>
    <alternativeName>
        <fullName evidence="1">PEP</fullName>
    </alternativeName>
    <alternativeName>
        <fullName evidence="1">Plastid-encoded RNA polymerase subunit beta'</fullName>
        <shortName evidence="1">RNA polymerase subunit beta'</shortName>
    </alternativeName>
</protein>
<sequence>MIDRYKHQQLRIGLVSPQQISAWANKTLPNGEIVGEVTKPYTFHYKTNKPEKDGLFCERIFGPIKSGICACGNYRVIGDKKEDSKFCEQCGVEFVDSRIRRYQMGYIKLACPVTHVWYLKRLPSYIANLLDKPLKELEGLVYCDFSFARPIAKKPTFLRLRGSFEYEIQSWKYSIPLFFTTQGFDTFRNREISTGAGAIREQLADLDLRLIIDYSLVEWKELGEEGPAGNEWEDRKVGRRKDFLVRRMELAKHFIRTNIEPEWMVLCLLPVLPPELRPIIQIDGGKLMSSDINELYRRVIYRNNTLIDLLTTSRSTPGELVMCQEKLVQEAVDTLLDNGIRGQPMRDGHNKVYKSFSDVIEGKEGRFRETLLGKRVDYSGRSVIVVGPSLSLHRCGLPREIAIELFQTFLIRGLIRQHFASNIGVAKSKIREKEPIVWEILQEVMQGHPVLLNRAPTLHRLGIQAFQPILVEGRAICLHPLVCKGFNADFDGDQMAVHVPLSLEAQAEARLLMFSHMNLLSSAIGDPISVPTQDMLIGLYVLTSGNRRGICANRYNPSNRKNHKNEKIYNNNYKYTKEPFFCNSYDAIGAYRQKRINLDSPLWLRWRLDQRVIASREAPIEVHYESLGTHHEIYGYYLIVKSIKKEILCIYIRTTVGHISLYREIEEAIQGFCRACSYGT</sequence>
<reference key="1">
    <citation type="journal article" date="2006" name="Plant Cell Rep.">
        <title>Complete sequence and organization of the cucumber (Cucumis sativus L. cv. Baekmibaekdadagi) chloroplast genome.</title>
        <authorList>
            <person name="Kim J.-S."/>
            <person name="Jung J.D."/>
            <person name="Lee J.-A."/>
            <person name="Park H.-W."/>
            <person name="Oh K.-H."/>
            <person name="Jeong W.J."/>
            <person name="Choi D.-W."/>
            <person name="Liu J.R."/>
            <person name="Cho K.Y."/>
        </authorList>
    </citation>
    <scope>NUCLEOTIDE SEQUENCE [LARGE SCALE GENOMIC DNA]</scope>
    <source>
        <strain>cv. Baekmibaekdadagi</strain>
    </source>
</reference>
<reference key="2">
    <citation type="journal article" date="2007" name="Cell. Mol. Biol. Lett.">
        <title>The complete structure of the cucumber (Cucumis sativus L.) chloroplast genome: its composition and comparative analysis.</title>
        <authorList>
            <person name="Plader W.W."/>
            <person name="Yukawa Y."/>
            <person name="Sugiura M."/>
            <person name="Malepszy S."/>
        </authorList>
    </citation>
    <scope>NUCLEOTIDE SEQUENCE [LARGE SCALE GENOMIC DNA]</scope>
    <source>
        <strain>cv. Borszczagowski</strain>
    </source>
</reference>
<reference key="3">
    <citation type="journal article" date="2007" name="Genome">
        <title>Sequencing cucumber (Cucumis sativus L.) chloroplast genomes identifies differences between chilling-tolerant and -susceptible cucumber lines.</title>
        <authorList>
            <person name="Chung S.-M."/>
            <person name="Gordon V.S."/>
            <person name="Staub J.E."/>
        </authorList>
    </citation>
    <scope>NUCLEOTIDE SEQUENCE [LARGE SCALE GENOMIC DNA]</scope>
    <source>
        <strain>cv. Chipper</strain>
        <strain>cv. Gy14</strain>
    </source>
</reference>
<evidence type="ECO:0000255" key="1">
    <source>
        <dbReference type="HAMAP-Rule" id="MF_01323"/>
    </source>
</evidence>
<evidence type="ECO:0000305" key="2"/>
<proteinExistence type="inferred from homology"/>
<keyword id="KW-0150">Chloroplast</keyword>
<keyword id="KW-0240">DNA-directed RNA polymerase</keyword>
<keyword id="KW-0460">Magnesium</keyword>
<keyword id="KW-0479">Metal-binding</keyword>
<keyword id="KW-0548">Nucleotidyltransferase</keyword>
<keyword id="KW-0934">Plastid</keyword>
<keyword id="KW-0804">Transcription</keyword>
<keyword id="KW-0808">Transferase</keyword>
<keyword id="KW-0862">Zinc</keyword>
<feature type="chain" id="PRO_0000225319" description="DNA-directed RNA polymerase subunit beta'">
    <location>
        <begin position="1"/>
        <end position="680"/>
    </location>
</feature>
<feature type="binding site" evidence="1">
    <location>
        <position position="69"/>
    </location>
    <ligand>
        <name>Zn(2+)</name>
        <dbReference type="ChEBI" id="CHEBI:29105"/>
    </ligand>
</feature>
<feature type="binding site" evidence="1">
    <location>
        <position position="71"/>
    </location>
    <ligand>
        <name>Zn(2+)</name>
        <dbReference type="ChEBI" id="CHEBI:29105"/>
    </ligand>
</feature>
<feature type="binding site" evidence="1">
    <location>
        <position position="87"/>
    </location>
    <ligand>
        <name>Zn(2+)</name>
        <dbReference type="ChEBI" id="CHEBI:29105"/>
    </ligand>
</feature>
<feature type="binding site" evidence="1">
    <location>
        <position position="90"/>
    </location>
    <ligand>
        <name>Zn(2+)</name>
        <dbReference type="ChEBI" id="CHEBI:29105"/>
    </ligand>
</feature>
<feature type="binding site" evidence="1">
    <location>
        <position position="489"/>
    </location>
    <ligand>
        <name>Mg(2+)</name>
        <dbReference type="ChEBI" id="CHEBI:18420"/>
    </ligand>
</feature>
<feature type="binding site" evidence="1">
    <location>
        <position position="491"/>
    </location>
    <ligand>
        <name>Mg(2+)</name>
        <dbReference type="ChEBI" id="CHEBI:18420"/>
    </ligand>
</feature>
<feature type="binding site" evidence="1">
    <location>
        <position position="493"/>
    </location>
    <ligand>
        <name>Mg(2+)</name>
        <dbReference type="ChEBI" id="CHEBI:18420"/>
    </ligand>
</feature>
<feature type="sequence conflict" description="In Ref. 2; CAJ00749." evidence="2" ref="2">
    <original>L</original>
    <variation>W</variation>
    <location>
        <position position="503"/>
    </location>
</feature>
<gene>
    <name evidence="1" type="primary">rpoC1</name>
    <name type="ordered locus">CsCp017</name>
</gene>
<name>RPOC1_CUCSA</name>
<organism>
    <name type="scientific">Cucumis sativus</name>
    <name type="common">Cucumber</name>
    <dbReference type="NCBI Taxonomy" id="3659"/>
    <lineage>
        <taxon>Eukaryota</taxon>
        <taxon>Viridiplantae</taxon>
        <taxon>Streptophyta</taxon>
        <taxon>Embryophyta</taxon>
        <taxon>Tracheophyta</taxon>
        <taxon>Spermatophyta</taxon>
        <taxon>Magnoliopsida</taxon>
        <taxon>eudicotyledons</taxon>
        <taxon>Gunneridae</taxon>
        <taxon>Pentapetalae</taxon>
        <taxon>rosids</taxon>
        <taxon>fabids</taxon>
        <taxon>Cucurbitales</taxon>
        <taxon>Cucurbitaceae</taxon>
        <taxon>Benincaseae</taxon>
        <taxon>Cucumis</taxon>
    </lineage>
</organism>
<dbReference type="EC" id="2.7.7.6" evidence="1"/>
<dbReference type="EMBL" id="DQ119058">
    <property type="protein sequence ID" value="AAZ94642.1"/>
    <property type="status" value="ALT_INIT"/>
    <property type="molecule type" value="Genomic_DNA"/>
</dbReference>
<dbReference type="EMBL" id="AJ970307">
    <property type="protein sequence ID" value="CAJ00749.1"/>
    <property type="status" value="ALT_INIT"/>
    <property type="molecule type" value="Genomic_DNA"/>
</dbReference>
<dbReference type="EMBL" id="DQ865975">
    <property type="protein sequence ID" value="ABI97408.1"/>
    <property type="molecule type" value="Genomic_DNA"/>
</dbReference>
<dbReference type="EMBL" id="DQ865976">
    <property type="protein sequence ID" value="ABI98736.1"/>
    <property type="molecule type" value="Genomic_DNA"/>
</dbReference>
<dbReference type="RefSeq" id="YP_247590.2">
    <property type="nucleotide sequence ID" value="NC_007144.1"/>
</dbReference>
<dbReference type="SMR" id="Q4VZP2"/>
<dbReference type="GeneID" id="3429303"/>
<dbReference type="KEGG" id="csv:3429303"/>
<dbReference type="eggNOG" id="ENOG502QPYA">
    <property type="taxonomic scope" value="Eukaryota"/>
</dbReference>
<dbReference type="OrthoDB" id="1862828at2759"/>
<dbReference type="GO" id="GO:0009507">
    <property type="term" value="C:chloroplast"/>
    <property type="evidence" value="ECO:0007669"/>
    <property type="project" value="UniProtKB-SubCell"/>
</dbReference>
<dbReference type="GO" id="GO:0000428">
    <property type="term" value="C:DNA-directed RNA polymerase complex"/>
    <property type="evidence" value="ECO:0007669"/>
    <property type="project" value="UniProtKB-KW"/>
</dbReference>
<dbReference type="GO" id="GO:0005739">
    <property type="term" value="C:mitochondrion"/>
    <property type="evidence" value="ECO:0007669"/>
    <property type="project" value="GOC"/>
</dbReference>
<dbReference type="GO" id="GO:0003677">
    <property type="term" value="F:DNA binding"/>
    <property type="evidence" value="ECO:0007669"/>
    <property type="project" value="UniProtKB-UniRule"/>
</dbReference>
<dbReference type="GO" id="GO:0003899">
    <property type="term" value="F:DNA-directed RNA polymerase activity"/>
    <property type="evidence" value="ECO:0007669"/>
    <property type="project" value="UniProtKB-UniRule"/>
</dbReference>
<dbReference type="GO" id="GO:0000287">
    <property type="term" value="F:magnesium ion binding"/>
    <property type="evidence" value="ECO:0007669"/>
    <property type="project" value="UniProtKB-UniRule"/>
</dbReference>
<dbReference type="GO" id="GO:0008270">
    <property type="term" value="F:zinc ion binding"/>
    <property type="evidence" value="ECO:0007669"/>
    <property type="project" value="UniProtKB-UniRule"/>
</dbReference>
<dbReference type="GO" id="GO:0006351">
    <property type="term" value="P:DNA-templated transcription"/>
    <property type="evidence" value="ECO:0007669"/>
    <property type="project" value="UniProtKB-UniRule"/>
</dbReference>
<dbReference type="FunFam" id="1.10.40.90:FF:000002">
    <property type="entry name" value="DNA-directed RNA polymerase subunit"/>
    <property type="match status" value="1"/>
</dbReference>
<dbReference type="FunFam" id="4.10.860.120:FF:000007">
    <property type="entry name" value="DNA-directed RNA polymerase subunit gamma"/>
    <property type="match status" value="1"/>
</dbReference>
<dbReference type="Gene3D" id="1.10.40.90">
    <property type="match status" value="1"/>
</dbReference>
<dbReference type="Gene3D" id="2.40.40.20">
    <property type="match status" value="1"/>
</dbReference>
<dbReference type="Gene3D" id="4.10.860.120">
    <property type="entry name" value="RNA polymerase II, clamp domain"/>
    <property type="match status" value="1"/>
</dbReference>
<dbReference type="Gene3D" id="1.10.274.100">
    <property type="entry name" value="RNA polymerase Rpb1, domain 3"/>
    <property type="match status" value="1"/>
</dbReference>
<dbReference type="HAMAP" id="MF_01323">
    <property type="entry name" value="RNApol_bact_RpoC1"/>
    <property type="match status" value="1"/>
</dbReference>
<dbReference type="InterPro" id="IPR045867">
    <property type="entry name" value="DNA-dir_RpoC_beta_prime"/>
</dbReference>
<dbReference type="InterPro" id="IPR000722">
    <property type="entry name" value="RNA_pol_asu"/>
</dbReference>
<dbReference type="InterPro" id="IPR006592">
    <property type="entry name" value="RNA_pol_N"/>
</dbReference>
<dbReference type="InterPro" id="IPR007080">
    <property type="entry name" value="RNA_pol_Rpb1_1"/>
</dbReference>
<dbReference type="InterPro" id="IPR042102">
    <property type="entry name" value="RNA_pol_Rpb1_3_sf"/>
</dbReference>
<dbReference type="InterPro" id="IPR044893">
    <property type="entry name" value="RNA_pol_Rpb1_clamp_domain"/>
</dbReference>
<dbReference type="InterPro" id="IPR034678">
    <property type="entry name" value="RNApol_RpoC1"/>
</dbReference>
<dbReference type="PANTHER" id="PTHR19376">
    <property type="entry name" value="DNA-DIRECTED RNA POLYMERASE"/>
    <property type="match status" value="1"/>
</dbReference>
<dbReference type="PANTHER" id="PTHR19376:SF54">
    <property type="entry name" value="DNA-DIRECTED RNA POLYMERASE SUBUNIT BETA"/>
    <property type="match status" value="1"/>
</dbReference>
<dbReference type="Pfam" id="PF04997">
    <property type="entry name" value="RNA_pol_Rpb1_1"/>
    <property type="match status" value="2"/>
</dbReference>
<dbReference type="Pfam" id="PF00623">
    <property type="entry name" value="RNA_pol_Rpb1_2"/>
    <property type="match status" value="2"/>
</dbReference>
<dbReference type="SMART" id="SM00663">
    <property type="entry name" value="RPOLA_N"/>
    <property type="match status" value="1"/>
</dbReference>
<dbReference type="SUPFAM" id="SSF64484">
    <property type="entry name" value="beta and beta-prime subunits of DNA dependent RNA-polymerase"/>
    <property type="match status" value="1"/>
</dbReference>